<evidence type="ECO:0000250" key="1"/>
<evidence type="ECO:0000250" key="2">
    <source>
        <dbReference type="UniProtKB" id="Q9R001"/>
    </source>
</evidence>
<evidence type="ECO:0000255" key="3"/>
<evidence type="ECO:0000255" key="4">
    <source>
        <dbReference type="PROSITE-ProRule" id="PRU00210"/>
    </source>
</evidence>
<evidence type="ECO:0000255" key="5">
    <source>
        <dbReference type="PROSITE-ProRule" id="PRU00276"/>
    </source>
</evidence>
<evidence type="ECO:0000255" key="6">
    <source>
        <dbReference type="PROSITE-ProRule" id="PRU10095"/>
    </source>
</evidence>
<evidence type="ECO:0000256" key="7">
    <source>
        <dbReference type="SAM" id="MobiDB-lite"/>
    </source>
</evidence>
<evidence type="ECO:0000269" key="8">
    <source>
    </source>
</evidence>
<evidence type="ECO:0000269" key="9">
    <source>
    </source>
</evidence>
<evidence type="ECO:0000269" key="10">
    <source>
    </source>
</evidence>
<evidence type="ECO:0000269" key="11">
    <source>
    </source>
</evidence>
<evidence type="ECO:0000269" key="12">
    <source>
    </source>
</evidence>
<evidence type="ECO:0000269" key="13">
    <source>
    </source>
</evidence>
<evidence type="ECO:0000269" key="14">
    <source>
    </source>
</evidence>
<evidence type="ECO:0007829" key="15">
    <source>
        <dbReference type="PDB" id="2RJQ"/>
    </source>
</evidence>
<evidence type="ECO:0007829" key="16">
    <source>
        <dbReference type="PDB" id="3B8Z"/>
    </source>
</evidence>
<evidence type="ECO:0007829" key="17">
    <source>
        <dbReference type="PDB" id="3HYG"/>
    </source>
</evidence>
<evidence type="ECO:0007829" key="18">
    <source>
        <dbReference type="PDB" id="3LJT"/>
    </source>
</evidence>
<dbReference type="EC" id="3.4.24.-"/>
<dbReference type="EMBL" id="AF142099">
    <property type="protein sequence ID" value="AAD49577.1"/>
    <property type="molecule type" value="mRNA"/>
</dbReference>
<dbReference type="EMBL" id="AP001698">
    <property type="protein sequence ID" value="BAA95504.1"/>
    <property type="molecule type" value="Genomic_DNA"/>
</dbReference>
<dbReference type="EMBL" id="AP001697">
    <property type="protein sequence ID" value="BAA95503.1"/>
    <property type="molecule type" value="Genomic_DNA"/>
</dbReference>
<dbReference type="EMBL" id="BC093775">
    <property type="protein sequence ID" value="AAH93775.1"/>
    <property type="molecule type" value="mRNA"/>
</dbReference>
<dbReference type="EMBL" id="BC093777">
    <property type="protein sequence ID" value="AAH93777.1"/>
    <property type="molecule type" value="mRNA"/>
</dbReference>
<dbReference type="EMBL" id="AF141293">
    <property type="protein sequence ID" value="AAF02493.1"/>
    <property type="molecule type" value="mRNA"/>
</dbReference>
<dbReference type="CCDS" id="CCDS13579.1"/>
<dbReference type="RefSeq" id="NP_008969.2">
    <property type="nucleotide sequence ID" value="NM_007038.5"/>
</dbReference>
<dbReference type="PDB" id="2RJQ">
    <property type="method" value="X-ray"/>
    <property type="resolution" value="2.60 A"/>
    <property type="chains" value="A=262-628"/>
</dbReference>
<dbReference type="PDB" id="3B8Z">
    <property type="method" value="X-ray"/>
    <property type="resolution" value="1.40 A"/>
    <property type="chains" value="A/B=264-480"/>
</dbReference>
<dbReference type="PDB" id="3HY7">
    <property type="method" value="X-ray"/>
    <property type="resolution" value="1.69 A"/>
    <property type="chains" value="A/B=262-480"/>
</dbReference>
<dbReference type="PDB" id="3HY9">
    <property type="method" value="X-ray"/>
    <property type="resolution" value="2.02 A"/>
    <property type="chains" value="A/B=262-480"/>
</dbReference>
<dbReference type="PDB" id="3HYG">
    <property type="method" value="X-ray"/>
    <property type="resolution" value="1.40 A"/>
    <property type="chains" value="A/B=262-480"/>
</dbReference>
<dbReference type="PDB" id="3LJT">
    <property type="method" value="X-ray"/>
    <property type="resolution" value="1.60 A"/>
    <property type="chains" value="A=264-480"/>
</dbReference>
<dbReference type="PDB" id="6YJM">
    <property type="method" value="X-ray"/>
    <property type="resolution" value="2.25 A"/>
    <property type="chains" value="A/B=264-481"/>
</dbReference>
<dbReference type="PDBsum" id="2RJQ"/>
<dbReference type="PDBsum" id="3B8Z"/>
<dbReference type="PDBsum" id="3HY7"/>
<dbReference type="PDBsum" id="3HY9"/>
<dbReference type="PDBsum" id="3HYG"/>
<dbReference type="PDBsum" id="3LJT"/>
<dbReference type="PDBsum" id="6YJM"/>
<dbReference type="SMR" id="Q9UNA0"/>
<dbReference type="BioGRID" id="116277">
    <property type="interactions" value="4"/>
</dbReference>
<dbReference type="FunCoup" id="Q9UNA0">
    <property type="interactions" value="127"/>
</dbReference>
<dbReference type="IntAct" id="Q9UNA0">
    <property type="interactions" value="4"/>
</dbReference>
<dbReference type="STRING" id="9606.ENSP00000284987"/>
<dbReference type="BindingDB" id="Q9UNA0"/>
<dbReference type="ChEMBL" id="CHEMBL2285"/>
<dbReference type="DrugBank" id="DB06837">
    <property type="generic name" value="(2R)-N~4~-hydroxy-2-(3-hydroxybenzyl)-N~1~-[(1S,2R)-2-hydroxy-2,3-dihydro-1H-inden-1-yl]butanediamide"/>
</dbReference>
<dbReference type="DrugBank" id="DB15460">
    <property type="generic name" value="AGG-523"/>
</dbReference>
<dbReference type="DrugBank" id="DB03880">
    <property type="generic name" value="Batimastat"/>
</dbReference>
<dbReference type="DrugBank" id="DB07926">
    <property type="generic name" value="N-[3-(N'-HYDROXYCARBOXAMIDO)-2-(2-METHYLPROPYL)-PROPANOYL]-O-TYROSINE-N-METHYLAMIDE"/>
</dbReference>
<dbReference type="DrugBank" id="DB06945">
    <property type="generic name" value="N-hydroxy-4-({4-[4-(trifluoromethyl)phenoxy]phenyl}sulfonyl)tetrahydro-2H-pyran-4-carboxamide"/>
</dbReference>
<dbReference type="GuidetoPHARMACOLOGY" id="1678"/>
<dbReference type="MEROPS" id="M12.225"/>
<dbReference type="GlyConnect" id="2006">
    <property type="glycosylation" value="1 O-Linked glycan (1 site)"/>
</dbReference>
<dbReference type="GlyCosmos" id="Q9UNA0">
    <property type="glycosylation" value="9 sites, 2 glycans"/>
</dbReference>
<dbReference type="GlyGen" id="Q9UNA0">
    <property type="glycosylation" value="15 sites, 4 O-linked glycans (7 sites)"/>
</dbReference>
<dbReference type="iPTMnet" id="Q9UNA0"/>
<dbReference type="PhosphoSitePlus" id="Q9UNA0"/>
<dbReference type="BioMuta" id="ADAMTS5"/>
<dbReference type="DMDM" id="317373326"/>
<dbReference type="MassIVE" id="Q9UNA0"/>
<dbReference type="PaxDb" id="9606-ENSP00000284987"/>
<dbReference type="PeptideAtlas" id="Q9UNA0"/>
<dbReference type="ProteomicsDB" id="85273"/>
<dbReference type="ABCD" id="Q9UNA0">
    <property type="antibodies" value="30 sequenced antibodies"/>
</dbReference>
<dbReference type="Antibodypedia" id="986">
    <property type="antibodies" value="498 antibodies from 35 providers"/>
</dbReference>
<dbReference type="DNASU" id="11096"/>
<dbReference type="Ensembl" id="ENST00000284987.6">
    <property type="protein sequence ID" value="ENSP00000284987.5"/>
    <property type="gene ID" value="ENSG00000154736.6"/>
</dbReference>
<dbReference type="GeneID" id="11096"/>
<dbReference type="KEGG" id="hsa:11096"/>
<dbReference type="MANE-Select" id="ENST00000284987.6">
    <property type="protein sequence ID" value="ENSP00000284987.5"/>
    <property type="RefSeq nucleotide sequence ID" value="NM_007038.5"/>
    <property type="RefSeq protein sequence ID" value="NP_008969.2"/>
</dbReference>
<dbReference type="UCSC" id="uc002ymg.4">
    <property type="organism name" value="human"/>
</dbReference>
<dbReference type="AGR" id="HGNC:221"/>
<dbReference type="CTD" id="11096"/>
<dbReference type="DisGeNET" id="11096"/>
<dbReference type="GeneCards" id="ADAMTS5"/>
<dbReference type="HGNC" id="HGNC:221">
    <property type="gene designation" value="ADAMTS5"/>
</dbReference>
<dbReference type="HPA" id="ENSG00000154736">
    <property type="expression patterns" value="Tissue enhanced (ovary, placenta)"/>
</dbReference>
<dbReference type="MIM" id="605007">
    <property type="type" value="gene"/>
</dbReference>
<dbReference type="neXtProt" id="NX_Q9UNA0"/>
<dbReference type="OpenTargets" id="ENSG00000154736"/>
<dbReference type="VEuPathDB" id="HostDB:ENSG00000154736"/>
<dbReference type="eggNOG" id="KOG3538">
    <property type="taxonomic scope" value="Eukaryota"/>
</dbReference>
<dbReference type="GeneTree" id="ENSGT00940000159090"/>
<dbReference type="HOGENOM" id="CLU_000660_3_0_1"/>
<dbReference type="InParanoid" id="Q9UNA0"/>
<dbReference type="OMA" id="TPCPPNG"/>
<dbReference type="OrthoDB" id="9936463at2759"/>
<dbReference type="PAN-GO" id="Q9UNA0">
    <property type="GO annotations" value="3 GO annotations based on evolutionary models"/>
</dbReference>
<dbReference type="PhylomeDB" id="Q9UNA0"/>
<dbReference type="TreeFam" id="TF331949"/>
<dbReference type="BRENDA" id="3.4.24.B12">
    <property type="organism ID" value="2681"/>
</dbReference>
<dbReference type="PathwayCommons" id="Q9UNA0"/>
<dbReference type="Reactome" id="R-HSA-1474228">
    <property type="pathway name" value="Degradation of the extracellular matrix"/>
</dbReference>
<dbReference type="Reactome" id="R-HSA-5083635">
    <property type="pathway name" value="Defective B3GALTL causes PpS"/>
</dbReference>
<dbReference type="Reactome" id="R-HSA-5173214">
    <property type="pathway name" value="O-glycosylation of TSR domain-containing proteins"/>
</dbReference>
<dbReference type="SignaLink" id="Q9UNA0"/>
<dbReference type="SIGNOR" id="Q9UNA0"/>
<dbReference type="BioGRID-ORCS" id="11096">
    <property type="hits" value="12 hits in 1155 CRISPR screens"/>
</dbReference>
<dbReference type="ChiTaRS" id="ADAMTS5">
    <property type="organism name" value="human"/>
</dbReference>
<dbReference type="EvolutionaryTrace" id="Q9UNA0"/>
<dbReference type="GeneWiki" id="ADAMTS5"/>
<dbReference type="GenomeRNAi" id="11096"/>
<dbReference type="Pharos" id="Q9UNA0">
    <property type="development level" value="Tchem"/>
</dbReference>
<dbReference type="PRO" id="PR:Q9UNA0"/>
<dbReference type="Proteomes" id="UP000005640">
    <property type="component" value="Chromosome 21"/>
</dbReference>
<dbReference type="RNAct" id="Q9UNA0">
    <property type="molecule type" value="protein"/>
</dbReference>
<dbReference type="Bgee" id="ENSG00000154736">
    <property type="expression patterns" value="Expressed in mammary duct and 183 other cell types or tissues"/>
</dbReference>
<dbReference type="ExpressionAtlas" id="Q9UNA0">
    <property type="expression patterns" value="baseline and differential"/>
</dbReference>
<dbReference type="GO" id="GO:0005788">
    <property type="term" value="C:endoplasmic reticulum lumen"/>
    <property type="evidence" value="ECO:0000304"/>
    <property type="project" value="Reactome"/>
</dbReference>
<dbReference type="GO" id="GO:0031012">
    <property type="term" value="C:extracellular matrix"/>
    <property type="evidence" value="ECO:0000318"/>
    <property type="project" value="GO_Central"/>
</dbReference>
<dbReference type="GO" id="GO:0005576">
    <property type="term" value="C:extracellular region"/>
    <property type="evidence" value="ECO:0000304"/>
    <property type="project" value="Reactome"/>
</dbReference>
<dbReference type="GO" id="GO:0005615">
    <property type="term" value="C:extracellular space"/>
    <property type="evidence" value="ECO:0007669"/>
    <property type="project" value="Ensembl"/>
</dbReference>
<dbReference type="GO" id="GO:0004175">
    <property type="term" value="F:endopeptidase activity"/>
    <property type="evidence" value="ECO:0000250"/>
    <property type="project" value="UniProtKB"/>
</dbReference>
<dbReference type="GO" id="GO:0050840">
    <property type="term" value="F:extracellular matrix binding"/>
    <property type="evidence" value="ECO:0007669"/>
    <property type="project" value="Ensembl"/>
</dbReference>
<dbReference type="GO" id="GO:0008201">
    <property type="term" value="F:heparin binding"/>
    <property type="evidence" value="ECO:0007669"/>
    <property type="project" value="Ensembl"/>
</dbReference>
<dbReference type="GO" id="GO:0042802">
    <property type="term" value="F:identical protein binding"/>
    <property type="evidence" value="ECO:0000353"/>
    <property type="project" value="UniProtKB"/>
</dbReference>
<dbReference type="GO" id="GO:0005178">
    <property type="term" value="F:integrin binding"/>
    <property type="evidence" value="ECO:0000304"/>
    <property type="project" value="ProtInc"/>
</dbReference>
<dbReference type="GO" id="GO:0004222">
    <property type="term" value="F:metalloendopeptidase activity"/>
    <property type="evidence" value="ECO:0000314"/>
    <property type="project" value="UniProtKB"/>
</dbReference>
<dbReference type="GO" id="GO:0008237">
    <property type="term" value="F:metallopeptidase activity"/>
    <property type="evidence" value="ECO:0000314"/>
    <property type="project" value="UniProtKB"/>
</dbReference>
<dbReference type="GO" id="GO:0008233">
    <property type="term" value="F:peptidase activity"/>
    <property type="evidence" value="ECO:0000314"/>
    <property type="project" value="UniProtKB"/>
</dbReference>
<dbReference type="GO" id="GO:0008270">
    <property type="term" value="F:zinc ion binding"/>
    <property type="evidence" value="ECO:0007669"/>
    <property type="project" value="InterPro"/>
</dbReference>
<dbReference type="GO" id="GO:0003180">
    <property type="term" value="P:aortic valve morphogenesis"/>
    <property type="evidence" value="ECO:0000250"/>
    <property type="project" value="BHF-UCL"/>
</dbReference>
<dbReference type="GO" id="GO:0042742">
    <property type="term" value="P:defense response to bacterium"/>
    <property type="evidence" value="ECO:0007669"/>
    <property type="project" value="Ensembl"/>
</dbReference>
<dbReference type="GO" id="GO:0003203">
    <property type="term" value="P:endocardial cushion morphogenesis"/>
    <property type="evidence" value="ECO:0000250"/>
    <property type="project" value="BHF-UCL"/>
</dbReference>
<dbReference type="GO" id="GO:0022617">
    <property type="term" value="P:extracellular matrix disassembly"/>
    <property type="evidence" value="ECO:0000250"/>
    <property type="project" value="UniProtKB"/>
</dbReference>
<dbReference type="GO" id="GO:0030198">
    <property type="term" value="P:extracellular matrix organization"/>
    <property type="evidence" value="ECO:0000318"/>
    <property type="project" value="GO_Central"/>
</dbReference>
<dbReference type="GO" id="GO:0007520">
    <property type="term" value="P:myoblast fusion"/>
    <property type="evidence" value="ECO:0000250"/>
    <property type="project" value="UniProtKB"/>
</dbReference>
<dbReference type="GO" id="GO:0120163">
    <property type="term" value="P:negative regulation of cold-induced thermogenesis"/>
    <property type="evidence" value="ECO:0000250"/>
    <property type="project" value="YuBioLab"/>
</dbReference>
<dbReference type="GO" id="GO:0006508">
    <property type="term" value="P:proteolysis"/>
    <property type="evidence" value="ECO:0000318"/>
    <property type="project" value="GO_Central"/>
</dbReference>
<dbReference type="GO" id="GO:0003184">
    <property type="term" value="P:pulmonary valve morphogenesis"/>
    <property type="evidence" value="ECO:0000250"/>
    <property type="project" value="BHF-UCL"/>
</dbReference>
<dbReference type="CDD" id="cd04273">
    <property type="entry name" value="ZnMc_ADAMTS_like"/>
    <property type="match status" value="1"/>
</dbReference>
<dbReference type="DisProt" id="DP02607"/>
<dbReference type="FunFam" id="2.20.100.10:FF:000006">
    <property type="entry name" value="A disintegrin and metalloproteinase with thrombospondin motifs 1"/>
    <property type="match status" value="1"/>
</dbReference>
<dbReference type="FunFam" id="2.60.120.830:FF:000001">
    <property type="entry name" value="A disintegrin and metalloproteinase with thrombospondin motifs 1"/>
    <property type="match status" value="1"/>
</dbReference>
<dbReference type="FunFam" id="3.40.390.10:FF:000001">
    <property type="entry name" value="A disintegrin and metalloproteinase with thrombospondin motifs 1"/>
    <property type="match status" value="1"/>
</dbReference>
<dbReference type="FunFam" id="3.40.1620.60:FF:000006">
    <property type="entry name" value="A disintegrin and metalloproteinase with thrombospondin motifs 5"/>
    <property type="match status" value="1"/>
</dbReference>
<dbReference type="Gene3D" id="2.60.120.830">
    <property type="match status" value="1"/>
</dbReference>
<dbReference type="Gene3D" id="3.40.1620.60">
    <property type="match status" value="2"/>
</dbReference>
<dbReference type="Gene3D" id="3.40.390.10">
    <property type="entry name" value="Collagenase (Catalytic Domain)"/>
    <property type="match status" value="1"/>
</dbReference>
<dbReference type="Gene3D" id="2.20.100.10">
    <property type="entry name" value="Thrombospondin type-1 (TSP1) repeat"/>
    <property type="match status" value="2"/>
</dbReference>
<dbReference type="InterPro" id="IPR006586">
    <property type="entry name" value="ADAM_Cys-rich"/>
</dbReference>
<dbReference type="InterPro" id="IPR013273">
    <property type="entry name" value="ADAMTS/ADAMTS-like"/>
</dbReference>
<dbReference type="InterPro" id="IPR050439">
    <property type="entry name" value="ADAMTS_ADAMTS-like"/>
</dbReference>
<dbReference type="InterPro" id="IPR041645">
    <property type="entry name" value="ADAMTS_CR_2"/>
</dbReference>
<dbReference type="InterPro" id="IPR045371">
    <property type="entry name" value="ADAMTS_CR_3"/>
</dbReference>
<dbReference type="InterPro" id="IPR010294">
    <property type="entry name" value="ADAMTS_spacer1"/>
</dbReference>
<dbReference type="InterPro" id="IPR024079">
    <property type="entry name" value="MetalloPept_cat_dom_sf"/>
</dbReference>
<dbReference type="InterPro" id="IPR013276">
    <property type="entry name" value="Pept_M12B_ADAM-TS5"/>
</dbReference>
<dbReference type="InterPro" id="IPR001590">
    <property type="entry name" value="Peptidase_M12B"/>
</dbReference>
<dbReference type="InterPro" id="IPR000884">
    <property type="entry name" value="TSP1_rpt"/>
</dbReference>
<dbReference type="InterPro" id="IPR036383">
    <property type="entry name" value="TSP1_rpt_sf"/>
</dbReference>
<dbReference type="PANTHER" id="PTHR13723:SF37">
    <property type="entry name" value="A DISINTEGRIN AND METALLOPROTEINASE WITH THROMBOSPONDIN MOTIFS 5"/>
    <property type="match status" value="1"/>
</dbReference>
<dbReference type="PANTHER" id="PTHR13723">
    <property type="entry name" value="ADAMTS A DISINTEGRIN AND METALLOPROTEASE WITH THROMBOSPONDIN MOTIFS PROTEASE"/>
    <property type="match status" value="1"/>
</dbReference>
<dbReference type="Pfam" id="PF17771">
    <property type="entry name" value="ADAMTS_CR_2"/>
    <property type="match status" value="1"/>
</dbReference>
<dbReference type="Pfam" id="PF19236">
    <property type="entry name" value="ADAMTS_CR_3"/>
    <property type="match status" value="1"/>
</dbReference>
<dbReference type="Pfam" id="PF05986">
    <property type="entry name" value="ADAMTS_spacer1"/>
    <property type="match status" value="1"/>
</dbReference>
<dbReference type="Pfam" id="PF01421">
    <property type="entry name" value="Reprolysin"/>
    <property type="match status" value="1"/>
</dbReference>
<dbReference type="Pfam" id="PF19030">
    <property type="entry name" value="TSP1_ADAMTS"/>
    <property type="match status" value="1"/>
</dbReference>
<dbReference type="Pfam" id="PF00090">
    <property type="entry name" value="TSP_1"/>
    <property type="match status" value="1"/>
</dbReference>
<dbReference type="PRINTS" id="PR01860">
    <property type="entry name" value="ADAMTS5"/>
</dbReference>
<dbReference type="PRINTS" id="PR01857">
    <property type="entry name" value="ADAMTSFAMILY"/>
</dbReference>
<dbReference type="SMART" id="SM00608">
    <property type="entry name" value="ACR"/>
    <property type="match status" value="1"/>
</dbReference>
<dbReference type="SMART" id="SM00209">
    <property type="entry name" value="TSP1"/>
    <property type="match status" value="2"/>
</dbReference>
<dbReference type="SUPFAM" id="SSF55486">
    <property type="entry name" value="Metalloproteases ('zincins'), catalytic domain"/>
    <property type="match status" value="1"/>
</dbReference>
<dbReference type="SUPFAM" id="SSF82895">
    <property type="entry name" value="TSP-1 type 1 repeat"/>
    <property type="match status" value="2"/>
</dbReference>
<dbReference type="PROSITE" id="PS50215">
    <property type="entry name" value="ADAM_MEPRO"/>
    <property type="match status" value="1"/>
</dbReference>
<dbReference type="PROSITE" id="PS50092">
    <property type="entry name" value="TSP1"/>
    <property type="match status" value="2"/>
</dbReference>
<dbReference type="PROSITE" id="PS00142">
    <property type="entry name" value="ZINC_PROTEASE"/>
    <property type="match status" value="1"/>
</dbReference>
<protein>
    <recommendedName>
        <fullName>A disintegrin and metalloproteinase with thrombospondin motifs 5</fullName>
        <shortName>ADAM-TS 5</shortName>
        <shortName>ADAM-TS5</shortName>
        <shortName>ADAMTS-5</shortName>
        <ecNumber>3.4.24.-</ecNumber>
    </recommendedName>
    <alternativeName>
        <fullName>A disintegrin and metalloproteinase with thrombospondin motifs 11</fullName>
        <shortName>ADAM-TS 11</shortName>
        <shortName>ADAMTS-11</shortName>
    </alternativeName>
    <alternativeName>
        <fullName>ADMP-2</fullName>
    </alternativeName>
    <alternativeName>
        <fullName>Aggrecanase-2</fullName>
    </alternativeName>
</protein>
<sequence>MLLGWASLLLCAFRLPLAAVGPAATPAQDKAGQPPTAAAAAQPRRRQGEEVQERAEPPGHPHPLAQRRRSKGLVQNIDQLYSGGGKVGYLVYAGGRRFLLDLERDGSVGIAGFVPAGGGTSAPWRHRSHCFYRGTVDGSPRSLAVFDLCGGLDGFFAVKHARYTLKPLLRGPWAEEEKGRVYGDGSARILHVYTREGFSFEALPPRASCETPASTPEAHEHAPAHSNPSGRAALASQLLDQSALSPAGGSGPQTWWRRRRRSISRARQVELLLVADASMARLYGRGLQHYLLTLASIANRLYSHASIENHIRLAVVKVVVLGDKDKSLEVSKNAATTLKNFCKWQHQHNQLGDDHEEHYDAAILFTREDLCGHHSCDTLGMADVGTICSPERSCAVIEDDGLHAAFTVAHEIGHLLGLSHDDSKFCEETFGSTEDKRLMSSILTSIDASKPWSKCTSATITEFLDDGHGNCLLDLPRKQILGPEELPGQTYDATQQCNLTFGPEYSVCPGMDVCARLWCAVVRQGQMVCLTKKLPAVEGTPCGKGRICLQGKCVDKTKKKYYSTSSHGNWGSWGSWGQCSRSCGGGVQFAYRHCNNPAPRNNGRYCTGKRAIYRSCSLMPCPPNGKSFRHEQCEAKNGYQSDAKGVKTFVEWVPKYAGVLPADVCKLTCRAKGTGYYVVFSPKVTDGTECRLYSNSVCVRGKCVRTGCDGIIGSKLQYDKCGVCGGDNSSCTKIVGTFNKKSKGYTDVVRIPEGATHIKVRQFKAKDQTRFTAYLALKKKNGEYLINGKYMISTSETIIDINGTVMNYSGWSHRDDFLHGMGYSATKEILIVQILATDPTKPLDVRYSFFVPKKSTPKVNSVTSHGSNKVGSHTSQPQWVTGPWLACSRTCDTGWHTRTVQCQDGNRKLAKGCPLSQRPSAFKQCLLKKC</sequence>
<proteinExistence type="evidence at protein level"/>
<organism>
    <name type="scientific">Homo sapiens</name>
    <name type="common">Human</name>
    <dbReference type="NCBI Taxonomy" id="9606"/>
    <lineage>
        <taxon>Eukaryota</taxon>
        <taxon>Metazoa</taxon>
        <taxon>Chordata</taxon>
        <taxon>Craniata</taxon>
        <taxon>Vertebrata</taxon>
        <taxon>Euteleostomi</taxon>
        <taxon>Mammalia</taxon>
        <taxon>Eutheria</taxon>
        <taxon>Euarchontoglires</taxon>
        <taxon>Primates</taxon>
        <taxon>Haplorrhini</taxon>
        <taxon>Catarrhini</taxon>
        <taxon>Hominidae</taxon>
        <taxon>Homo</taxon>
    </lineage>
</organism>
<comment type="function">
    <text evidence="2 11 13">Metalloproteinase that plays an important role in connective tissue organization, development, inflammation and cell migration. Extracellular matrix (ECM) degrading enzyme that show proteolytic activity toward the hyalectan group of chondroitin sulfate proteoglycans (CSPGs) including ACAN, VCAN, BCAN and NCAN (PubMed:16133547, PubMed:18992360). Cleavage within the hyalectans occurs at Glu-Xaa recognition motifs. Plays a role in embryonic development, including limb and cardiac morphogenesis, and skeletal muscle development through its VCAN remodeling properties. Cleaves VCAN in the pericellular matrix surrounding myoblasts, facilitating myoblast contact and fusion which is required for skeletal muscle development and regeneration (By similarity). Participates in development of brown adipose tissue and browning of white adipose tissue (By similarity). Plays an important role for T-lymphocyte migration from draining lymph nodes following viral infection.</text>
</comment>
<comment type="cofactor">
    <cofactor evidence="12">
        <name>Zn(2+)</name>
        <dbReference type="ChEBI" id="CHEBI:29105"/>
    </cofactor>
    <text evidence="12">Binds 1 zinc ion per subunit.</text>
</comment>
<comment type="interaction">
    <interactant intactId="EBI-2808663">
        <id>Q9UNA0</id>
    </interactant>
    <interactant intactId="EBI-6259246">
        <id>P13608</id>
        <label>ACAN</label>
    </interactant>
    <organismsDiffer>true</organismsDiffer>
    <experiments>2</experiments>
</comment>
<comment type="subcellular location">
    <subcellularLocation>
        <location evidence="13">Secreted</location>
        <location evidence="13">Extracellular space</location>
        <location evidence="13">Extracellular matrix</location>
    </subcellularLocation>
</comment>
<comment type="tissue specificity">
    <text>Expressed at low level in placenta primarily but also detected in heart and brain, cervix, uterus, bladder, esophagus, rib cartilage, chondroblastoma, fibrous tissue and a joint capsule from an arthritic patient.</text>
</comment>
<comment type="domain">
    <text>The spacer domain and the TSP type-1 domains are important for a tight interaction with the extracellular matrix.</text>
</comment>
<comment type="domain">
    <text>The conserved cysteine present in the cysteine-switch motif binds the catalytic zinc ion, thus inhibiting the enzyme. The dissociation of the cysteine from the zinc ion upon the activation-peptide release activates the enzyme.</text>
</comment>
<comment type="PTM">
    <text evidence="13">The precursor is cleaved by furin and PCSK7 outside of the cell.</text>
</comment>
<comment type="PTM">
    <text evidence="1">Glycosylated. Can be O-fucosylated by POFUT2 on a serine or a threonine residue found within the consensus sequence C1-X(2)-(S/T)-C2-G of the TSP type-1 repeat domains where C1 and C2 are the first and second cysteine residue of the repeat, respectively. Fucosylated repeats can then be further glycosylated by the addition of a beta-1,3-glucose residue by the glucosyltransferase, B3GALTL. Fucosylation mediates the efficient secretion of ADAMTS family members. Can also be C-glycosylated with one or two mannose molecules on tryptophan residues within the consensus sequence W-X-X-W of the TPRs, and N-glycosylated. These other glycosylations can also facilitate secretion (By similarity).</text>
</comment>
<feature type="signal peptide" evidence="3">
    <location>
        <begin position="1"/>
        <end position="16"/>
    </location>
</feature>
<feature type="propeptide" id="PRO_0000029170" evidence="13">
    <location>
        <begin position="17"/>
        <end position="261"/>
    </location>
</feature>
<feature type="chain" id="PRO_0000029171" description="A disintegrin and metalloproteinase with thrombospondin motifs 5">
    <location>
        <begin position="262"/>
        <end position="930"/>
    </location>
</feature>
<feature type="domain" description="Peptidase M12B" evidence="5">
    <location>
        <begin position="267"/>
        <end position="476"/>
    </location>
</feature>
<feature type="domain" description="Disintegrin">
    <location>
        <begin position="485"/>
        <end position="566"/>
    </location>
</feature>
<feature type="domain" description="TSP type-1 1" evidence="4">
    <location>
        <begin position="567"/>
        <end position="622"/>
    </location>
</feature>
<feature type="domain" description="TSP type-1 2" evidence="4">
    <location>
        <begin position="875"/>
        <end position="929"/>
    </location>
</feature>
<feature type="region of interest" description="Disordered" evidence="7">
    <location>
        <begin position="24"/>
        <end position="69"/>
    </location>
</feature>
<feature type="region of interest" description="Disordered" evidence="7">
    <location>
        <begin position="206"/>
        <end position="231"/>
    </location>
</feature>
<feature type="region of interest" description="Spacer">
    <location>
        <begin position="732"/>
        <end position="874"/>
    </location>
</feature>
<feature type="short sequence motif" description="Cysteine switch" evidence="1">
    <location>
        <begin position="207"/>
        <end position="214"/>
    </location>
</feature>
<feature type="compositionally biased region" description="Low complexity" evidence="7">
    <location>
        <begin position="31"/>
        <end position="42"/>
    </location>
</feature>
<feature type="compositionally biased region" description="Basic and acidic residues" evidence="7">
    <location>
        <begin position="46"/>
        <end position="59"/>
    </location>
</feature>
<feature type="active site" evidence="5 6 12">
    <location>
        <position position="411"/>
    </location>
</feature>
<feature type="binding site" description="in inhibited form" evidence="1">
    <location>
        <position position="209"/>
    </location>
    <ligand>
        <name>Zn(2+)</name>
        <dbReference type="ChEBI" id="CHEBI:29105"/>
        <note>catalytic</note>
    </ligand>
</feature>
<feature type="binding site" evidence="12">
    <location>
        <position position="410"/>
    </location>
    <ligand>
        <name>Zn(2+)</name>
        <dbReference type="ChEBI" id="CHEBI:29105"/>
        <note>catalytic</note>
    </ligand>
</feature>
<feature type="binding site" evidence="12">
    <location>
        <position position="414"/>
    </location>
    <ligand>
        <name>Zn(2+)</name>
        <dbReference type="ChEBI" id="CHEBI:29105"/>
        <note>catalytic</note>
    </ligand>
</feature>
<feature type="binding site" evidence="12">
    <location>
        <position position="420"/>
    </location>
    <ligand>
        <name>Zn(2+)</name>
        <dbReference type="ChEBI" id="CHEBI:29105"/>
        <note>catalytic</note>
    </ligand>
</feature>
<feature type="site" description="Cleavage; by furin and PCSK7" evidence="13">
    <location>
        <position position="261"/>
    </location>
</feature>
<feature type="glycosylation site" description="N-linked (GlcNAc...) asparagine" evidence="12">
    <location>
        <position position="498"/>
    </location>
</feature>
<feature type="glycosylation site" description="C-linked (Man) tryptophan" evidence="14">
    <location>
        <position position="570"/>
    </location>
</feature>
<feature type="glycosylation site" description="C-linked (Man) tryptophan" evidence="14">
    <location>
        <position position="573"/>
    </location>
</feature>
<feature type="glycosylation site" description="O-linked (Fuc...) serine" evidence="14">
    <location>
        <position position="582"/>
    </location>
</feature>
<feature type="glycosylation site" description="N-linked (GlcNAc...) asparagine" evidence="3">
    <location>
        <position position="728"/>
    </location>
</feature>
<feature type="glycosylation site" description="N-linked (GlcNAc...) asparagine" evidence="3">
    <location>
        <position position="802"/>
    </location>
</feature>
<feature type="glycosylation site" description="N-linked (GlcNAc...) asparagine" evidence="3">
    <location>
        <position position="807"/>
    </location>
</feature>
<feature type="disulfide bond" evidence="12">
    <location>
        <begin position="342"/>
        <end position="394"/>
    </location>
</feature>
<feature type="disulfide bond" evidence="12">
    <location>
        <begin position="371"/>
        <end position="376"/>
    </location>
</feature>
<feature type="disulfide bond" evidence="12">
    <location>
        <begin position="388"/>
        <end position="471"/>
    </location>
</feature>
<feature type="disulfide bond" evidence="12">
    <location>
        <begin position="426"/>
        <end position="455"/>
    </location>
</feature>
<feature type="disulfide bond" evidence="12">
    <location>
        <begin position="497"/>
        <end position="519"/>
    </location>
</feature>
<feature type="disulfide bond" evidence="12">
    <location>
        <begin position="508"/>
        <end position="529"/>
    </location>
</feature>
<feature type="disulfide bond" evidence="12">
    <location>
        <begin position="514"/>
        <end position="548"/>
    </location>
</feature>
<feature type="disulfide bond" evidence="12">
    <location>
        <begin position="542"/>
        <end position="553"/>
    </location>
</feature>
<feature type="disulfide bond" evidence="1">
    <location>
        <begin position="579"/>
        <end position="616"/>
    </location>
</feature>
<feature type="disulfide bond" evidence="1">
    <location>
        <begin position="583"/>
        <end position="621"/>
    </location>
</feature>
<feature type="disulfide bond" evidence="1">
    <location>
        <begin position="594"/>
        <end position="606"/>
    </location>
</feature>
<feature type="sequence variant" id="VAR_028199" description="In dbSNP:rs457947." evidence="8 10">
    <original>G</original>
    <variation>A</variation>
    <location>
        <position position="138"/>
    </location>
</feature>
<feature type="sequence variant" id="VAR_021849" description="In dbSNP:rs2830585." evidence="9">
    <original>R</original>
    <variation>H</variation>
    <location>
        <position position="614"/>
    </location>
</feature>
<feature type="sequence variant" id="VAR_028200" description="In dbSNP:rs226794." evidence="8 9 10">
    <original>L</original>
    <variation>P</variation>
    <location>
        <position position="692"/>
    </location>
</feature>
<feature type="mutagenesis site" description="Complete loss of catalytic activity." evidence="13">
    <original>E</original>
    <variation>A</variation>
    <location>
        <position position="411"/>
    </location>
</feature>
<feature type="strand" evidence="16">
    <location>
        <begin position="267"/>
        <end position="275"/>
    </location>
</feature>
<feature type="helix" evidence="16">
    <location>
        <begin position="277"/>
        <end position="283"/>
    </location>
</feature>
<feature type="helix" evidence="16">
    <location>
        <begin position="284"/>
        <end position="286"/>
    </location>
</feature>
<feature type="helix" evidence="16">
    <location>
        <begin position="287"/>
        <end position="302"/>
    </location>
</feature>
<feature type="helix" evidence="16">
    <location>
        <begin position="305"/>
        <end position="307"/>
    </location>
</feature>
<feature type="strand" evidence="16">
    <location>
        <begin position="311"/>
        <end position="320"/>
    </location>
</feature>
<feature type="turn" evidence="17">
    <location>
        <begin position="323"/>
        <end position="326"/>
    </location>
</feature>
<feature type="helix" evidence="16">
    <location>
        <begin position="334"/>
        <end position="348"/>
    </location>
</feature>
<feature type="strand" evidence="18">
    <location>
        <begin position="353"/>
        <end position="356"/>
    </location>
</feature>
<feature type="strand" evidence="16">
    <location>
        <begin position="360"/>
        <end position="368"/>
    </location>
</feature>
<feature type="strand" evidence="16">
    <location>
        <begin position="380"/>
        <end position="382"/>
    </location>
</feature>
<feature type="helix" evidence="16">
    <location>
        <begin position="390"/>
        <end position="392"/>
    </location>
</feature>
<feature type="strand" evidence="16">
    <location>
        <begin position="394"/>
        <end position="398"/>
    </location>
</feature>
<feature type="strand" evidence="16">
    <location>
        <begin position="401"/>
        <end position="403"/>
    </location>
</feature>
<feature type="helix" evidence="16">
    <location>
        <begin position="404"/>
        <end position="415"/>
    </location>
</feature>
<feature type="helix" evidence="16">
    <location>
        <begin position="424"/>
        <end position="430"/>
    </location>
</feature>
<feature type="strand" evidence="16">
    <location>
        <begin position="435"/>
        <end position="437"/>
    </location>
</feature>
<feature type="strand" evidence="15">
    <location>
        <begin position="440"/>
        <end position="442"/>
    </location>
</feature>
<feature type="helix" evidence="18">
    <location>
        <begin position="443"/>
        <end position="445"/>
    </location>
</feature>
<feature type="helix" evidence="16">
    <location>
        <begin position="454"/>
        <end position="465"/>
    </location>
</feature>
<feature type="turn" evidence="16">
    <location>
        <begin position="466"/>
        <end position="469"/>
    </location>
</feature>
<feature type="helix" evidence="16">
    <location>
        <begin position="470"/>
        <end position="472"/>
    </location>
</feature>
<feature type="helix" evidence="15">
    <location>
        <begin position="487"/>
        <end position="490"/>
    </location>
</feature>
<feature type="helix" evidence="15">
    <location>
        <begin position="493"/>
        <end position="501"/>
    </location>
</feature>
<feature type="strand" evidence="15">
    <location>
        <begin position="509"/>
        <end position="511"/>
    </location>
</feature>
<feature type="turn" evidence="15">
    <location>
        <begin position="513"/>
        <end position="515"/>
    </location>
</feature>
<feature type="strand" evidence="15">
    <location>
        <begin position="519"/>
        <end position="523"/>
    </location>
</feature>
<feature type="strand" evidence="15">
    <location>
        <begin position="526"/>
        <end position="530"/>
    </location>
</feature>
<feature type="strand" evidence="15">
    <location>
        <begin position="543"/>
        <end position="545"/>
    </location>
</feature>
<feature type="strand" evidence="15">
    <location>
        <begin position="547"/>
        <end position="549"/>
    </location>
</feature>
<feature type="strand" evidence="15">
    <location>
        <begin position="552"/>
        <end position="554"/>
    </location>
</feature>
<keyword id="KW-0002">3D-structure</keyword>
<keyword id="KW-0165">Cleavage on pair of basic residues</keyword>
<keyword id="KW-1015">Disulfide bond</keyword>
<keyword id="KW-0272">Extracellular matrix</keyword>
<keyword id="KW-0325">Glycoprotein</keyword>
<keyword id="KW-0378">Hydrolase</keyword>
<keyword id="KW-0479">Metal-binding</keyword>
<keyword id="KW-0482">Metalloprotease</keyword>
<keyword id="KW-0645">Protease</keyword>
<keyword id="KW-1267">Proteomics identification</keyword>
<keyword id="KW-1185">Reference proteome</keyword>
<keyword id="KW-0677">Repeat</keyword>
<keyword id="KW-0964">Secreted</keyword>
<keyword id="KW-0732">Signal</keyword>
<keyword id="KW-0862">Zinc</keyword>
<keyword id="KW-0865">Zymogen</keyword>
<gene>
    <name type="primary">ADAMTS5</name>
    <name type="synonym">ADAMTS11</name>
    <name type="synonym">ADMP2</name>
</gene>
<accession>Q9UNA0</accession>
<accession>Q52LV4</accession>
<accession>Q9UKP2</accession>
<reference key="1">
    <citation type="journal article" date="1999" name="J. Biol. Chem.">
        <title>Cloning and characterization of ADAMTS11, an aggrecanase from the ADAMTS family.</title>
        <authorList>
            <person name="Abbaszade I."/>
            <person name="Liu R.-Q."/>
            <person name="Yang F."/>
            <person name="Rosenfeld S.A."/>
            <person name="Ross O.H."/>
            <person name="Link J.R."/>
            <person name="Ellis D.M."/>
            <person name="Tortorella M.D."/>
            <person name="Pratta M.A."/>
            <person name="Hollis J.M."/>
            <person name="Wynn R."/>
            <person name="Duke J.L."/>
            <person name="George H.J."/>
            <person name="Hillman M.C. Jr."/>
            <person name="Murphy K."/>
            <person name="Wiswall B.H."/>
            <person name="Copeland R.A."/>
            <person name="Decicco C.P."/>
            <person name="Bruckner R."/>
            <person name="Nagase H."/>
            <person name="Ito Y."/>
            <person name="Newton R.C."/>
            <person name="Magolda R.L."/>
            <person name="Trzaskos J.M."/>
            <person name="Hollis G.F."/>
            <person name="Arner E.C."/>
            <person name="Burn T.C."/>
        </authorList>
    </citation>
    <scope>NUCLEOTIDE SEQUENCE [MRNA]</scope>
    <scope>VARIANTS ALA-138 AND PRO-692</scope>
    <source>
        <tissue>Liver</tissue>
    </source>
</reference>
<reference key="2">
    <citation type="journal article" date="2000" name="Nature">
        <title>The DNA sequence of human chromosome 21.</title>
        <authorList>
            <person name="Hattori M."/>
            <person name="Fujiyama A."/>
            <person name="Taylor T.D."/>
            <person name="Watanabe H."/>
            <person name="Yada T."/>
            <person name="Park H.-S."/>
            <person name="Toyoda A."/>
            <person name="Ishii K."/>
            <person name="Totoki Y."/>
            <person name="Choi D.-K."/>
            <person name="Groner Y."/>
            <person name="Soeda E."/>
            <person name="Ohki M."/>
            <person name="Takagi T."/>
            <person name="Sakaki Y."/>
            <person name="Taudien S."/>
            <person name="Blechschmidt K."/>
            <person name="Polley A."/>
            <person name="Menzel U."/>
            <person name="Delabar J."/>
            <person name="Kumpf K."/>
            <person name="Lehmann R."/>
            <person name="Patterson D."/>
            <person name="Reichwald K."/>
            <person name="Rump A."/>
            <person name="Schillhabel M."/>
            <person name="Schudy A."/>
            <person name="Zimmermann W."/>
            <person name="Rosenthal A."/>
            <person name="Kudoh J."/>
            <person name="Shibuya K."/>
            <person name="Kawasaki K."/>
            <person name="Asakawa S."/>
            <person name="Shintani A."/>
            <person name="Sasaki T."/>
            <person name="Nagamine K."/>
            <person name="Mitsuyama S."/>
            <person name="Antonarakis S.E."/>
            <person name="Minoshima S."/>
            <person name="Shimizu N."/>
            <person name="Nordsiek G."/>
            <person name="Hornischer K."/>
            <person name="Brandt P."/>
            <person name="Scharfe M."/>
            <person name="Schoen O."/>
            <person name="Desario A."/>
            <person name="Reichelt J."/>
            <person name="Kauer G."/>
            <person name="Bloecker H."/>
            <person name="Ramser J."/>
            <person name="Beck A."/>
            <person name="Klages S."/>
            <person name="Hennig S."/>
            <person name="Riesselmann L."/>
            <person name="Dagand E."/>
            <person name="Wehrmeyer S."/>
            <person name="Borzym K."/>
            <person name="Gardiner K."/>
            <person name="Nizetic D."/>
            <person name="Francis F."/>
            <person name="Lehrach H."/>
            <person name="Reinhardt R."/>
            <person name="Yaspo M.-L."/>
        </authorList>
    </citation>
    <scope>NUCLEOTIDE SEQUENCE [LARGE SCALE GENOMIC DNA]</scope>
</reference>
<reference key="3">
    <citation type="journal article" date="2004" name="Genome Res.">
        <title>The status, quality, and expansion of the NIH full-length cDNA project: the Mammalian Gene Collection (MGC).</title>
        <authorList>
            <consortium name="The MGC Project Team"/>
        </authorList>
    </citation>
    <scope>NUCLEOTIDE SEQUENCE [LARGE SCALE MRNA]</scope>
    <scope>VARIANTS ALA-138 AND PRO-692</scope>
    <source>
        <tissue>Colon</tissue>
    </source>
</reference>
<reference key="4">
    <citation type="journal article" date="1999" name="J. Biol. Chem.">
        <title>ADAM-TS5, ADAM-TS6, and ADAM-TS7, novel members of a new family of zinc metalloproteases.</title>
        <authorList>
            <person name="Hurskainen T.L."/>
            <person name="Hirohata S."/>
            <person name="Seldin M.F."/>
            <person name="Apte S.S."/>
        </authorList>
    </citation>
    <scope>NUCLEOTIDE SEQUENCE [MRNA] OF 413-930</scope>
    <scope>VARIANTS HIS-614 AND PRO-692</scope>
    <source>
        <tissue>Fetal brain</tissue>
    </source>
</reference>
<reference key="5">
    <citation type="journal article" date="2005" name="Acta Neuropathol.">
        <title>Human glioblastomas overexpress ADAMTS-5 that degrades brevican.</title>
        <authorList>
            <person name="Nakada M."/>
            <person name="Miyamori H."/>
            <person name="Kita D."/>
            <person name="Takahashi T."/>
            <person name="Yamashita J."/>
            <person name="Sato H."/>
            <person name="Miura R."/>
            <person name="Yamaguchi Y."/>
            <person name="Okada Y."/>
        </authorList>
    </citation>
    <scope>FUNCTION</scope>
</reference>
<reference key="6">
    <citation type="journal article" date="2009" name="Int. J. Biochem. Cell Biol.">
        <title>Characterization of proADAMTS5 processing by proprotein convertases.</title>
        <authorList>
            <person name="Longpre J.M."/>
            <person name="McCulloch D.R."/>
            <person name="Koo B.H."/>
            <person name="Alexander J.P."/>
            <person name="Apte S.S."/>
            <person name="Leduc R."/>
        </authorList>
    </citation>
    <scope>FUNCTION</scope>
    <scope>SUBCELLULAR LOCATION</scope>
    <scope>CLEAVAGE</scope>
    <scope>MUTAGENESIS OF GLU-411</scope>
</reference>
<reference key="7">
    <citation type="journal article" date="2009" name="J. Biol. Chem.">
        <title>Post-translational modification of thrombospondin type-1 repeats in ADAMTS-like 1/punctin-1 by C-mannosylation of tryptophan.</title>
        <authorList>
            <person name="Wang L.W."/>
            <person name="Leonhard-Melief C."/>
            <person name="Haltiwanger R.S."/>
            <person name="Apte S.S."/>
        </authorList>
    </citation>
    <scope>GLYCOSYLATION AT TRP-570; TRP-573 AND SER-582</scope>
    <scope>IDENTIFICATION BY MASS SPECTROMETRY</scope>
</reference>
<reference key="8">
    <citation type="journal article" date="2008" name="Protein Sci.">
        <title>Crystal structures of the two major aggrecan degrading enzymes, ADAMTS4 and ADAMTS5.</title>
        <authorList>
            <person name="Mosyak L."/>
            <person name="Georgiadis K."/>
            <person name="Shane T."/>
            <person name="Svenson K."/>
            <person name="Hebert T."/>
            <person name="McDonagh T."/>
            <person name="Mackie S."/>
            <person name="Olland S."/>
            <person name="Lin L."/>
            <person name="Zhong X."/>
            <person name="Kriz R."/>
            <person name="Reifenberg E.L."/>
            <person name="Collins-Racie L.A."/>
            <person name="Corcoran C."/>
            <person name="Freeman B."/>
            <person name="Zollner R."/>
            <person name="Marvell T."/>
            <person name="Vera M."/>
            <person name="Sum P.E."/>
            <person name="Lavallie E.R."/>
            <person name="Stahl M."/>
            <person name="Somers W."/>
        </authorList>
    </citation>
    <scope>X-RAY CRYSTALLOGRAPHY (2.6 ANGSTROMS) OF 262-628 IN COMPLEX WITH INHIBITOR</scope>
    <scope>ACTIVE SITE</scope>
    <scope>COFACTOR</scope>
    <scope>ZINC-BINDING SITES</scope>
    <scope>DISULFIDE BONDS</scope>
    <scope>GLYCOSYLATION AT ASN-498</scope>
</reference>
<name>ATS5_HUMAN</name>